<name>DTD_THEAQ</name>
<feature type="chain" id="PRO_0000164610" description="D-aminoacyl-tRNA deacylase">
    <location>
        <begin position="1"/>
        <end position="152"/>
    </location>
</feature>
<feature type="short sequence motif" description="Gly-cisPro motif, important for rejection of L-amino acids" evidence="1">
    <location>
        <begin position="137"/>
        <end position="138"/>
    </location>
</feature>
<protein>
    <recommendedName>
        <fullName evidence="1">D-aminoacyl-tRNA deacylase</fullName>
        <shortName evidence="1">DTD</shortName>
        <ecNumber evidence="1">3.1.1.96</ecNumber>
    </recommendedName>
    <alternativeName>
        <fullName evidence="1">Gly-tRNA(Ala) deacylase</fullName>
    </alternativeName>
</protein>
<accession>Q9KH11</accession>
<proteinExistence type="inferred from homology"/>
<reference key="1">
    <citation type="journal article" date="2000" name="J. Biol. Chem.">
        <title>Cloning, overexpression, and characterization of peroxiredoxin and NADH peroxiredoxin reductase from Thermus aquaticus.</title>
        <authorList>
            <person name="Logan C."/>
            <person name="Mayhew S.G."/>
        </authorList>
    </citation>
    <scope>NUCLEOTIDE SEQUENCE [GENOMIC DNA]</scope>
</reference>
<evidence type="ECO:0000255" key="1">
    <source>
        <dbReference type="HAMAP-Rule" id="MF_00518"/>
    </source>
</evidence>
<evidence type="ECO:0000305" key="2"/>
<gene>
    <name evidence="1" type="primary">dtd</name>
</gene>
<organism>
    <name type="scientific">Thermus aquaticus</name>
    <dbReference type="NCBI Taxonomy" id="271"/>
    <lineage>
        <taxon>Bacteria</taxon>
        <taxon>Thermotogati</taxon>
        <taxon>Deinococcota</taxon>
        <taxon>Deinococci</taxon>
        <taxon>Thermales</taxon>
        <taxon>Thermaceae</taxon>
        <taxon>Thermus</taxon>
    </lineage>
</organism>
<sequence length="152" mass="16373">MRAVIQRAKEAKVTVGGEVVGAIDAGFVVLLGITHEDTEDDAAYLAEKIAHLRVFEDEDGKMNRSLLDVGGAVLSVSQFTLYGDCRKGRRPNFMAAAKPDHALPLYEAFNAALRERGVHVETGVFGAMMDVSLTNDGPVTLIIDSSEKPGNR</sequence>
<dbReference type="EC" id="3.1.1.96" evidence="1"/>
<dbReference type="EMBL" id="AF276071">
    <property type="protein sequence ID" value="AAF82117.1"/>
    <property type="status" value="ALT_INIT"/>
    <property type="molecule type" value="Genomic_DNA"/>
</dbReference>
<dbReference type="SMR" id="Q9KH11"/>
<dbReference type="GO" id="GO:0005737">
    <property type="term" value="C:cytoplasm"/>
    <property type="evidence" value="ECO:0007669"/>
    <property type="project" value="UniProtKB-SubCell"/>
</dbReference>
<dbReference type="GO" id="GO:0051500">
    <property type="term" value="F:D-tyrosyl-tRNA(Tyr) deacylase activity"/>
    <property type="evidence" value="ECO:0007669"/>
    <property type="project" value="TreeGrafter"/>
</dbReference>
<dbReference type="GO" id="GO:0106026">
    <property type="term" value="F:Gly-tRNA(Ala) deacylase activity"/>
    <property type="evidence" value="ECO:0007669"/>
    <property type="project" value="UniProtKB-UniRule"/>
</dbReference>
<dbReference type="GO" id="GO:0043908">
    <property type="term" value="F:Ser(Gly)-tRNA(Ala) hydrolase activity"/>
    <property type="evidence" value="ECO:0007669"/>
    <property type="project" value="UniProtKB-UniRule"/>
</dbReference>
<dbReference type="GO" id="GO:0000049">
    <property type="term" value="F:tRNA binding"/>
    <property type="evidence" value="ECO:0007669"/>
    <property type="project" value="UniProtKB-UniRule"/>
</dbReference>
<dbReference type="GO" id="GO:0019478">
    <property type="term" value="P:D-amino acid catabolic process"/>
    <property type="evidence" value="ECO:0007669"/>
    <property type="project" value="UniProtKB-UniRule"/>
</dbReference>
<dbReference type="CDD" id="cd00563">
    <property type="entry name" value="Dtyr_deacylase"/>
    <property type="match status" value="1"/>
</dbReference>
<dbReference type="FunFam" id="3.50.80.10:FF:000001">
    <property type="entry name" value="D-aminoacyl-tRNA deacylase"/>
    <property type="match status" value="1"/>
</dbReference>
<dbReference type="Gene3D" id="3.50.80.10">
    <property type="entry name" value="D-tyrosyl-tRNA(Tyr) deacylase"/>
    <property type="match status" value="1"/>
</dbReference>
<dbReference type="HAMAP" id="MF_00518">
    <property type="entry name" value="Deacylase_Dtd"/>
    <property type="match status" value="1"/>
</dbReference>
<dbReference type="InterPro" id="IPR003732">
    <property type="entry name" value="Daa-tRNA_deacyls_DTD"/>
</dbReference>
<dbReference type="InterPro" id="IPR023509">
    <property type="entry name" value="DTD-like_sf"/>
</dbReference>
<dbReference type="NCBIfam" id="TIGR00256">
    <property type="entry name" value="D-aminoacyl-tRNA deacylase"/>
    <property type="match status" value="1"/>
</dbReference>
<dbReference type="PANTHER" id="PTHR10472:SF5">
    <property type="entry name" value="D-AMINOACYL-TRNA DEACYLASE 1"/>
    <property type="match status" value="1"/>
</dbReference>
<dbReference type="PANTHER" id="PTHR10472">
    <property type="entry name" value="D-TYROSYL-TRNA TYR DEACYLASE"/>
    <property type="match status" value="1"/>
</dbReference>
<dbReference type="Pfam" id="PF02580">
    <property type="entry name" value="Tyr_Deacylase"/>
    <property type="match status" value="1"/>
</dbReference>
<dbReference type="SUPFAM" id="SSF69500">
    <property type="entry name" value="DTD-like"/>
    <property type="match status" value="1"/>
</dbReference>
<keyword id="KW-0963">Cytoplasm</keyword>
<keyword id="KW-0378">Hydrolase</keyword>
<keyword id="KW-0694">RNA-binding</keyword>
<keyword id="KW-0820">tRNA-binding</keyword>
<comment type="function">
    <text evidence="1">An aminoacyl-tRNA editing enzyme that deacylates mischarged D-aminoacyl-tRNAs. Also deacylates mischarged glycyl-tRNA(Ala), protecting cells against glycine mischarging by AlaRS. Acts via tRNA-based rather than protein-based catalysis; rejects L-amino acids rather than detecting D-amino acids in the active site. By recycling D-aminoacyl-tRNA to D-amino acids and free tRNA molecules, this enzyme counteracts the toxicity associated with the formation of D-aminoacyl-tRNA entities in vivo and helps enforce protein L-homochirality.</text>
</comment>
<comment type="catalytic activity">
    <reaction evidence="1">
        <text>glycyl-tRNA(Ala) + H2O = tRNA(Ala) + glycine + H(+)</text>
        <dbReference type="Rhea" id="RHEA:53744"/>
        <dbReference type="Rhea" id="RHEA-COMP:9657"/>
        <dbReference type="Rhea" id="RHEA-COMP:13640"/>
        <dbReference type="ChEBI" id="CHEBI:15377"/>
        <dbReference type="ChEBI" id="CHEBI:15378"/>
        <dbReference type="ChEBI" id="CHEBI:57305"/>
        <dbReference type="ChEBI" id="CHEBI:78442"/>
        <dbReference type="ChEBI" id="CHEBI:78522"/>
        <dbReference type="EC" id="3.1.1.96"/>
    </reaction>
</comment>
<comment type="catalytic activity">
    <reaction evidence="1">
        <text>a D-aminoacyl-tRNA + H2O = a tRNA + a D-alpha-amino acid + H(+)</text>
        <dbReference type="Rhea" id="RHEA:13953"/>
        <dbReference type="Rhea" id="RHEA-COMP:10123"/>
        <dbReference type="Rhea" id="RHEA-COMP:10124"/>
        <dbReference type="ChEBI" id="CHEBI:15377"/>
        <dbReference type="ChEBI" id="CHEBI:15378"/>
        <dbReference type="ChEBI" id="CHEBI:59871"/>
        <dbReference type="ChEBI" id="CHEBI:78442"/>
        <dbReference type="ChEBI" id="CHEBI:79333"/>
        <dbReference type="EC" id="3.1.1.96"/>
    </reaction>
</comment>
<comment type="subunit">
    <text evidence="1">Homodimer.</text>
</comment>
<comment type="subcellular location">
    <subcellularLocation>
        <location evidence="1">Cytoplasm</location>
    </subcellularLocation>
</comment>
<comment type="domain">
    <text evidence="1">A Gly-cisPro motif from one monomer fits into the active site of the other monomer to allow specific chiral rejection of L-amino acids.</text>
</comment>
<comment type="similarity">
    <text evidence="1">Belongs to the DTD family.</text>
</comment>
<comment type="sequence caution" evidence="2">
    <conflict type="erroneous initiation">
        <sequence resource="EMBL-CDS" id="AAF82117"/>
    </conflict>
    <text>Extended N-terminus.</text>
</comment>